<protein>
    <recommendedName>
        <fullName evidence="2">Putative endoplasmic reticulum metallopeptidase 1-A</fullName>
        <ecNumber evidence="7">3.4.-.-</ecNumber>
    </recommendedName>
    <alternativeName>
        <fullName evidence="7">FXNA-like protease</fullName>
    </alternativeName>
</protein>
<evidence type="ECO:0000250" key="1">
    <source>
        <dbReference type="UniProtKB" id="P80561"/>
    </source>
</evidence>
<evidence type="ECO:0000250" key="2">
    <source>
        <dbReference type="UniProtKB" id="Q6UPR8"/>
    </source>
</evidence>
<evidence type="ECO:0000255" key="3"/>
<evidence type="ECO:0000256" key="4">
    <source>
        <dbReference type="SAM" id="MobiDB-lite"/>
    </source>
</evidence>
<evidence type="ECO:0000269" key="5">
    <source>
    </source>
</evidence>
<evidence type="ECO:0000269" key="6">
    <source>
    </source>
</evidence>
<evidence type="ECO:0000305" key="7"/>
<gene>
    <name type="ORF">B0495.7</name>
</gene>
<proteinExistence type="evidence at protein level"/>
<accession>Q09216</accession>
<comment type="cofactor">
    <cofactor evidence="1">
        <name>Zn(2+)</name>
        <dbReference type="ChEBI" id="CHEBI:29105"/>
    </cofactor>
    <text evidence="1">Binds 2 Zn(2+) ions per subunit.</text>
</comment>
<comment type="subcellular location">
    <subcellularLocation>
        <location evidence="2">Endoplasmic reticulum membrane</location>
        <topology evidence="3">Multi-pass membrane protein</topology>
    </subcellularLocation>
</comment>
<comment type="similarity">
    <text evidence="7">Belongs to the peptidase M28 family.</text>
</comment>
<feature type="chain" id="PRO_0000065088" description="Putative endoplasmic reticulum metallopeptidase 1-A">
    <location>
        <begin position="1"/>
        <end position="895"/>
    </location>
</feature>
<feature type="topological domain" description="Cytoplasmic" evidence="7">
    <location>
        <begin position="1"/>
        <end position="34"/>
    </location>
</feature>
<feature type="transmembrane region" description="Helical; Name=1" evidence="3">
    <location>
        <begin position="35"/>
        <end position="55"/>
    </location>
</feature>
<feature type="topological domain" description="Lumenal" evidence="7">
    <location>
        <begin position="56"/>
        <end position="383"/>
    </location>
</feature>
<feature type="transmembrane region" description="Helical; Name=2" evidence="3">
    <location>
        <begin position="384"/>
        <end position="404"/>
    </location>
</feature>
<feature type="topological domain" description="Cytoplasmic" evidence="7">
    <location>
        <begin position="405"/>
        <end position="423"/>
    </location>
</feature>
<feature type="transmembrane region" description="Helical; Name=3" evidence="3">
    <location>
        <begin position="424"/>
        <end position="444"/>
    </location>
</feature>
<feature type="topological domain" description="Lumenal" evidence="7">
    <location>
        <begin position="445"/>
        <end position="452"/>
    </location>
</feature>
<feature type="transmembrane region" description="Helical; Name=4" evidence="3">
    <location>
        <begin position="453"/>
        <end position="473"/>
    </location>
</feature>
<feature type="topological domain" description="Cytoplasmic" evidence="7">
    <location>
        <begin position="474"/>
        <end position="492"/>
    </location>
</feature>
<feature type="transmembrane region" description="Helical; Name=5" evidence="3">
    <location>
        <begin position="493"/>
        <end position="513"/>
    </location>
</feature>
<feature type="topological domain" description="Lumenal" evidence="7">
    <location>
        <begin position="514"/>
        <end position="517"/>
    </location>
</feature>
<feature type="transmembrane region" description="Helical; Name=6" evidence="3">
    <location>
        <begin position="518"/>
        <end position="538"/>
    </location>
</feature>
<feature type="topological domain" description="Cytoplasmic" evidence="7">
    <location>
        <begin position="539"/>
        <end position="544"/>
    </location>
</feature>
<feature type="transmembrane region" description="Helical; Name=7" evidence="3">
    <location>
        <begin position="545"/>
        <end position="565"/>
    </location>
</feature>
<feature type="topological domain" description="Lumenal" evidence="7">
    <location>
        <begin position="566"/>
        <end position="586"/>
    </location>
</feature>
<feature type="transmembrane region" description="Helical; Name=8" evidence="3">
    <location>
        <begin position="587"/>
        <end position="607"/>
    </location>
</feature>
<feature type="topological domain" description="Cytoplasmic" evidence="7">
    <location>
        <begin position="608"/>
        <end position="613"/>
    </location>
</feature>
<feature type="transmembrane region" description="Helical; Name=9" evidence="3">
    <location>
        <begin position="614"/>
        <end position="634"/>
    </location>
</feature>
<feature type="topological domain" description="Lumenal" evidence="7">
    <location>
        <begin position="635"/>
        <end position="895"/>
    </location>
</feature>
<feature type="region of interest" description="Disordered" evidence="4">
    <location>
        <begin position="1"/>
        <end position="30"/>
    </location>
</feature>
<feature type="compositionally biased region" description="Basic and acidic residues" evidence="4">
    <location>
        <begin position="10"/>
        <end position="30"/>
    </location>
</feature>
<feature type="active site" description="Proton acceptor" evidence="1">
    <location>
        <position position="220"/>
    </location>
</feature>
<feature type="binding site" evidence="1">
    <location>
        <position position="174"/>
    </location>
    <ligand>
        <name>Zn(2+)</name>
        <dbReference type="ChEBI" id="CHEBI:29105"/>
        <label>1</label>
        <note>catalytic</note>
    </ligand>
</feature>
<feature type="binding site" evidence="1">
    <location>
        <position position="186"/>
    </location>
    <ligand>
        <name>Zn(2+)</name>
        <dbReference type="ChEBI" id="CHEBI:29105"/>
        <label>1</label>
        <note>catalytic</note>
    </ligand>
</feature>
<feature type="binding site" evidence="1">
    <location>
        <position position="186"/>
    </location>
    <ligand>
        <name>Zn(2+)</name>
        <dbReference type="ChEBI" id="CHEBI:29105"/>
        <label>2</label>
        <note>catalytic</note>
    </ligand>
</feature>
<feature type="binding site" evidence="1">
    <location>
        <position position="221"/>
    </location>
    <ligand>
        <name>Zn(2+)</name>
        <dbReference type="ChEBI" id="CHEBI:29105"/>
        <label>2</label>
        <note>catalytic</note>
    </ligand>
</feature>
<feature type="binding site" evidence="1">
    <location>
        <position position="247"/>
    </location>
    <ligand>
        <name>Zn(2+)</name>
        <dbReference type="ChEBI" id="CHEBI:29105"/>
        <label>1</label>
        <note>catalytic</note>
    </ligand>
</feature>
<feature type="binding site" evidence="1">
    <location>
        <position position="323"/>
    </location>
    <ligand>
        <name>Zn(2+)</name>
        <dbReference type="ChEBI" id="CHEBI:29105"/>
        <label>2</label>
        <note>catalytic</note>
    </ligand>
</feature>
<feature type="site" description="Transition state stabilizer" evidence="1">
    <location>
        <position position="322"/>
    </location>
</feature>
<feature type="glycosylation site" description="N-linked (GlcNAc...) asparagine" evidence="5 6">
    <location>
        <position position="659"/>
    </location>
</feature>
<feature type="glycosylation site" description="N-linked (GlcNAc...) asparagine" evidence="5 6">
    <location>
        <position position="702"/>
    </location>
</feature>
<feature type="glycosylation site" description="N-linked (GlcNAc...) asparagine" evidence="6">
    <location>
        <position position="758"/>
    </location>
</feature>
<keyword id="KW-0256">Endoplasmic reticulum</keyword>
<keyword id="KW-0325">Glycoprotein</keyword>
<keyword id="KW-0378">Hydrolase</keyword>
<keyword id="KW-0472">Membrane</keyword>
<keyword id="KW-0479">Metal-binding</keyword>
<keyword id="KW-0482">Metalloprotease</keyword>
<keyword id="KW-0645">Protease</keyword>
<keyword id="KW-1185">Reference proteome</keyword>
<keyword id="KW-0812">Transmembrane</keyword>
<keyword id="KW-1133">Transmembrane helix</keyword>
<keyword id="KW-0862">Zinc</keyword>
<dbReference type="EC" id="3.4.-.-" evidence="7"/>
<dbReference type="EMBL" id="FO080132">
    <property type="protein sequence ID" value="CCD61475.1"/>
    <property type="molecule type" value="Genomic_DNA"/>
</dbReference>
<dbReference type="RefSeq" id="NP_495618.1">
    <property type="nucleotide sequence ID" value="NM_063217.6"/>
</dbReference>
<dbReference type="SMR" id="Q09216"/>
<dbReference type="BioGRID" id="39579">
    <property type="interactions" value="1"/>
</dbReference>
<dbReference type="FunCoup" id="Q09216">
    <property type="interactions" value="1608"/>
</dbReference>
<dbReference type="STRING" id="6239.B0495.7.3"/>
<dbReference type="MEROPS" id="M28.A20"/>
<dbReference type="iPTMnet" id="Q09216"/>
<dbReference type="PaxDb" id="6239-B0495.7.1"/>
<dbReference type="PeptideAtlas" id="Q09216"/>
<dbReference type="EnsemblMetazoa" id="B0495.7.1">
    <property type="protein sequence ID" value="B0495.7.1"/>
    <property type="gene ID" value="WBGene00015206"/>
</dbReference>
<dbReference type="GeneID" id="174245"/>
<dbReference type="KEGG" id="cel:CELE_B0495.7"/>
<dbReference type="UCSC" id="B0495.7.1">
    <property type="organism name" value="c. elegans"/>
</dbReference>
<dbReference type="AGR" id="WB:WBGene00015206"/>
<dbReference type="CTD" id="174245"/>
<dbReference type="WormBase" id="B0495.7">
    <property type="protein sequence ID" value="CE29550"/>
    <property type="gene ID" value="WBGene00015206"/>
</dbReference>
<dbReference type="eggNOG" id="KOG2194">
    <property type="taxonomic scope" value="Eukaryota"/>
</dbReference>
<dbReference type="GeneTree" id="ENSGT00530000063839"/>
<dbReference type="HOGENOM" id="CLU_007536_2_0_1"/>
<dbReference type="InParanoid" id="Q09216"/>
<dbReference type="OMA" id="YLTHKKC"/>
<dbReference type="OrthoDB" id="76293at2759"/>
<dbReference type="PhylomeDB" id="Q09216"/>
<dbReference type="PRO" id="PR:Q09216"/>
<dbReference type="Proteomes" id="UP000001940">
    <property type="component" value="Chromosome II"/>
</dbReference>
<dbReference type="Bgee" id="WBGene00015206">
    <property type="expression patterns" value="Expressed in embryo and 7 other cell types or tissues"/>
</dbReference>
<dbReference type="GO" id="GO:0005789">
    <property type="term" value="C:endoplasmic reticulum membrane"/>
    <property type="evidence" value="ECO:0007669"/>
    <property type="project" value="UniProtKB-SubCell"/>
</dbReference>
<dbReference type="GO" id="GO:0046872">
    <property type="term" value="F:metal ion binding"/>
    <property type="evidence" value="ECO:0007669"/>
    <property type="project" value="UniProtKB-KW"/>
</dbReference>
<dbReference type="GO" id="GO:0008235">
    <property type="term" value="F:metalloexopeptidase activity"/>
    <property type="evidence" value="ECO:0007669"/>
    <property type="project" value="InterPro"/>
</dbReference>
<dbReference type="GO" id="GO:0006508">
    <property type="term" value="P:proteolysis"/>
    <property type="evidence" value="ECO:0000318"/>
    <property type="project" value="GO_Central"/>
</dbReference>
<dbReference type="CDD" id="cd03875">
    <property type="entry name" value="M28_Fxna_like"/>
    <property type="match status" value="1"/>
</dbReference>
<dbReference type="FunFam" id="3.40.630.10:FF:000008">
    <property type="entry name" value="Endoplasmic reticulum metallopeptidase 1"/>
    <property type="match status" value="1"/>
</dbReference>
<dbReference type="Gene3D" id="3.40.630.10">
    <property type="entry name" value="Zn peptidases"/>
    <property type="match status" value="1"/>
</dbReference>
<dbReference type="InterPro" id="IPR053973">
    <property type="entry name" value="ERMP1-like_C"/>
</dbReference>
<dbReference type="InterPro" id="IPR053974">
    <property type="entry name" value="ERMP1_1-A_TM"/>
</dbReference>
<dbReference type="InterPro" id="IPR048024">
    <property type="entry name" value="Fxna-like_M28_dom"/>
</dbReference>
<dbReference type="InterPro" id="IPR045175">
    <property type="entry name" value="M28_fam"/>
</dbReference>
<dbReference type="InterPro" id="IPR007484">
    <property type="entry name" value="Peptidase_M28"/>
</dbReference>
<dbReference type="PANTHER" id="PTHR12147:SF22">
    <property type="entry name" value="ENDOPLASMIC RETICULUM METALLOPEPTIDASE 1"/>
    <property type="match status" value="1"/>
</dbReference>
<dbReference type="PANTHER" id="PTHR12147">
    <property type="entry name" value="METALLOPEPTIDASE M28 FAMILY MEMBER"/>
    <property type="match status" value="1"/>
</dbReference>
<dbReference type="Pfam" id="PF22249">
    <property type="entry name" value="ERMP1-TM"/>
    <property type="match status" value="1"/>
</dbReference>
<dbReference type="Pfam" id="PF22248">
    <property type="entry name" value="ERMP1_C"/>
    <property type="match status" value="1"/>
</dbReference>
<dbReference type="Pfam" id="PF04389">
    <property type="entry name" value="Peptidase_M28"/>
    <property type="match status" value="1"/>
</dbReference>
<dbReference type="SUPFAM" id="SSF53187">
    <property type="entry name" value="Zn-dependent exopeptidases"/>
    <property type="match status" value="1"/>
</dbReference>
<organism>
    <name type="scientific">Caenorhabditis elegans</name>
    <dbReference type="NCBI Taxonomy" id="6239"/>
    <lineage>
        <taxon>Eukaryota</taxon>
        <taxon>Metazoa</taxon>
        <taxon>Ecdysozoa</taxon>
        <taxon>Nematoda</taxon>
        <taxon>Chromadorea</taxon>
        <taxon>Rhabditida</taxon>
        <taxon>Rhabditina</taxon>
        <taxon>Rhabditomorpha</taxon>
        <taxon>Rhabditoidea</taxon>
        <taxon>Rhabditidae</taxon>
        <taxon>Peloderinae</taxon>
        <taxon>Caenorhabditis</taxon>
    </lineage>
</organism>
<sequence length="895" mass="102122">MLRRRGGPNELRDELNNSKNQPEDDQRTKRGRESIGFRHWIYFVLTVAIVYAGVVALHRKMPAVRDGTSFEDFSEQRARVLLKQLTALGSRPSGSDNLEVKAFGMIQDRIGKIHSVVDEVGVNRLESDVQRPSGCFDLKFLSSFTLCYHKITNVVVRIGPKKGPSGNSLLLNCHFDTMPDTPGATDDAVACTIMMDVLEVLAHSKTELENDVVFLFNGAEENFLQAAHGFINQHPWRHDIRAFINLEGTGSGGREILFQAGPGNSWLLQTYLENAPHPFCSVLAQEIFQSGIIPSDTDFRIFRDYGRISGLDIAYTKNGWFYHTEFDEEWRIEPGAIQRAGENVLAVVRAILKSPYLEKPATFDEENRWVFYDVVGLFTVYYSVNVGKLLNYIACFATYFLVVLRIRNRLYSVGDLAIAFKHHVVAFLAMVITMLLIIAFVVQMDLVMCWYKMPEIVGALYVLPMLIAGAIVHSHYADNNRIRNVEMVQYDTILLSFASILFLMTFYNLSSAFYVLNNLILPVFKDIIIWALGLFGVIRRVTPRVLFFTQLFCFLPTFVFAAYAISQCVDFFVPVMGRLGNAINPEFIMGPLGLVIASGFILFVNNLFYISRRMNYIIRLLFAIFALFILVLITTKVGNPYEYSHENPRLRRIIALHANRTIYDFEGHLTQKDNALFVHSLDYRGASDLPDHSFLQGSSAPNCTGVVDEYCRMPYYTAIHELFPPEQSLWVPVPSPVVLPYPIDLKLVSRHAMGENLNLTFEIRGGYDKMSLHVTPLNDYDLLSWSFTDIDIKEFGRRQTYFVFMTYGHEAPEVRRFWILLKNKNGVAPDPEKHENIELSVATHYAHGIYQDTETLRQLRAMISSRRQTPEQAVGWWRWGITMVGGRSEIVVKIF</sequence>
<reference key="1">
    <citation type="journal article" date="1998" name="Science">
        <title>Genome sequence of the nematode C. elegans: a platform for investigating biology.</title>
        <authorList>
            <consortium name="The C. elegans sequencing consortium"/>
        </authorList>
    </citation>
    <scope>NUCLEOTIDE SEQUENCE [LARGE SCALE GENOMIC DNA]</scope>
    <source>
        <strain>Bristol N2</strain>
    </source>
</reference>
<reference key="2">
    <citation type="journal article" date="2005" name="Glycobiology">
        <title>Identification of the hydrophobic glycoproteins of Caenorhabditis elegans.</title>
        <authorList>
            <person name="Fan X."/>
            <person name="She Y.-M."/>
            <person name="Bagshaw R.D."/>
            <person name="Callahan J.W."/>
            <person name="Schachter H."/>
            <person name="Mahuran D.J."/>
        </authorList>
    </citation>
    <scope>GLYCOSYLATION [LARGE SCALE ANALYSIS] AT ASN-659 AND ASN-702</scope>
    <scope>IDENTIFICATION BY MASS SPECTROMETRY</scope>
</reference>
<reference key="3">
    <citation type="journal article" date="2007" name="Mol. Cell. Proteomics">
        <title>Proteomics reveals N-linked glycoprotein diversity in Caenorhabditis elegans and suggests an atypical translocation mechanism for integral membrane proteins.</title>
        <authorList>
            <person name="Kaji H."/>
            <person name="Kamiie J."/>
            <person name="Kawakami H."/>
            <person name="Kido K."/>
            <person name="Yamauchi Y."/>
            <person name="Shinkawa T."/>
            <person name="Taoka M."/>
            <person name="Takahashi N."/>
            <person name="Isobe T."/>
        </authorList>
    </citation>
    <scope>GLYCOSYLATION [LARGE SCALE ANALYSIS] AT ASN-659; ASN-702 AND ASN-758</scope>
    <scope>IDENTIFICATION BY MASS SPECTROMETRY</scope>
    <source>
        <strain>Bristol N2</strain>
    </source>
</reference>
<name>ERP1A_CAEEL</name>